<organism>
    <name type="scientific">Caulobacter vibrioides (strain ATCC 19089 / CIP 103742 / CB 15)</name>
    <name type="common">Caulobacter crescentus</name>
    <dbReference type="NCBI Taxonomy" id="190650"/>
    <lineage>
        <taxon>Bacteria</taxon>
        <taxon>Pseudomonadati</taxon>
        <taxon>Pseudomonadota</taxon>
        <taxon>Alphaproteobacteria</taxon>
        <taxon>Caulobacterales</taxon>
        <taxon>Caulobacteraceae</taxon>
        <taxon>Caulobacter</taxon>
    </lineage>
</organism>
<protein>
    <recommendedName>
        <fullName evidence="1">Homoserine kinase</fullName>
        <shortName evidence="1">HK</shortName>
        <shortName evidence="1">HSK</shortName>
        <ecNumber evidence="1">2.7.1.39</ecNumber>
    </recommendedName>
</protein>
<comment type="catalytic activity">
    <reaction evidence="1">
        <text>L-homoserine + ATP = O-phospho-L-homoserine + ADP + H(+)</text>
        <dbReference type="Rhea" id="RHEA:13985"/>
        <dbReference type="ChEBI" id="CHEBI:15378"/>
        <dbReference type="ChEBI" id="CHEBI:30616"/>
        <dbReference type="ChEBI" id="CHEBI:57476"/>
        <dbReference type="ChEBI" id="CHEBI:57590"/>
        <dbReference type="ChEBI" id="CHEBI:456216"/>
        <dbReference type="EC" id="2.7.1.39"/>
    </reaction>
</comment>
<comment type="pathway">
    <text evidence="1">Amino-acid biosynthesis; L-threonine biosynthesis; L-threonine from L-aspartate: step 4/5.</text>
</comment>
<comment type="similarity">
    <text evidence="1">Belongs to the pseudomonas-type ThrB family.</text>
</comment>
<reference key="1">
    <citation type="journal article" date="2001" name="Proc. Natl. Acad. Sci. U.S.A.">
        <title>Complete genome sequence of Caulobacter crescentus.</title>
        <authorList>
            <person name="Nierman W.C."/>
            <person name="Feldblyum T.V."/>
            <person name="Laub M.T."/>
            <person name="Paulsen I.T."/>
            <person name="Nelson K.E."/>
            <person name="Eisen J.A."/>
            <person name="Heidelberg J.F."/>
            <person name="Alley M.R.K."/>
            <person name="Ohta N."/>
            <person name="Maddock J.R."/>
            <person name="Potocka I."/>
            <person name="Nelson W.C."/>
            <person name="Newton A."/>
            <person name="Stephens C."/>
            <person name="Phadke N.D."/>
            <person name="Ely B."/>
            <person name="DeBoy R.T."/>
            <person name="Dodson R.J."/>
            <person name="Durkin A.S."/>
            <person name="Gwinn M.L."/>
            <person name="Haft D.H."/>
            <person name="Kolonay J.F."/>
            <person name="Smit J."/>
            <person name="Craven M.B."/>
            <person name="Khouri H.M."/>
            <person name="Shetty J."/>
            <person name="Berry K.J."/>
            <person name="Utterback T.R."/>
            <person name="Tran K."/>
            <person name="Wolf A.M."/>
            <person name="Vamathevan J.J."/>
            <person name="Ermolaeva M.D."/>
            <person name="White O."/>
            <person name="Salzberg S.L."/>
            <person name="Venter J.C."/>
            <person name="Shapiro L."/>
            <person name="Fraser C.M."/>
        </authorList>
    </citation>
    <scope>NUCLEOTIDE SEQUENCE [LARGE SCALE GENOMIC DNA]</scope>
    <source>
        <strain>ATCC 19089 / CIP 103742 / CB 15</strain>
    </source>
</reference>
<accession>Q9A342</accession>
<sequence>MAVYTDITDQELEAFLEGYDLGAPLAFKGIAEGVENSNFLLETEKGRYILTVYERRVKAEDLPYFLNMLTWLADRGYPSARPIPTRSGATLSSLRGKPAAIVEFLPGLSVRKPTAAHCREAGEGLAWLHLAGEGYPGRRANDLGQAAWSPLFSKHRKAAEDLKPGLSATIDNDLAQLSLMWPRNLPTGTIHADYFPDNVFFQSNGKFAAAIDFYFACDDAYAYDVAVTLNAWCFEADGSFNITAAKALLNGYERRRPLSPIEKEALPILARGAAMRFFLTRLADWGSTPAGALVRPKDPLEYERKLAVHREGLVLFA</sequence>
<name>KHSE_CAUVC</name>
<feature type="chain" id="PRO_0000172189" description="Homoserine kinase">
    <location>
        <begin position="1"/>
        <end position="317"/>
    </location>
</feature>
<gene>
    <name evidence="1" type="primary">thrB</name>
    <name type="ordered locus">CC_3364</name>
</gene>
<keyword id="KW-0028">Amino-acid biosynthesis</keyword>
<keyword id="KW-0067">ATP-binding</keyword>
<keyword id="KW-0418">Kinase</keyword>
<keyword id="KW-0547">Nucleotide-binding</keyword>
<keyword id="KW-1185">Reference proteome</keyword>
<keyword id="KW-0791">Threonine biosynthesis</keyword>
<keyword id="KW-0808">Transferase</keyword>
<evidence type="ECO:0000255" key="1">
    <source>
        <dbReference type="HAMAP-Rule" id="MF_00301"/>
    </source>
</evidence>
<proteinExistence type="inferred from homology"/>
<dbReference type="EC" id="2.7.1.39" evidence="1"/>
<dbReference type="EMBL" id="AE005673">
    <property type="protein sequence ID" value="AAK25326.1"/>
    <property type="molecule type" value="Genomic_DNA"/>
</dbReference>
<dbReference type="PIR" id="B87666">
    <property type="entry name" value="B87666"/>
</dbReference>
<dbReference type="RefSeq" id="NP_422158.1">
    <property type="nucleotide sequence ID" value="NC_002696.2"/>
</dbReference>
<dbReference type="RefSeq" id="WP_010921193.1">
    <property type="nucleotide sequence ID" value="NC_002696.2"/>
</dbReference>
<dbReference type="SMR" id="Q9A342"/>
<dbReference type="STRING" id="190650.CC_3364"/>
<dbReference type="EnsemblBacteria" id="AAK25326">
    <property type="protein sequence ID" value="AAK25326"/>
    <property type="gene ID" value="CC_3364"/>
</dbReference>
<dbReference type="KEGG" id="ccr:CC_3364"/>
<dbReference type="PATRIC" id="fig|190650.5.peg.3371"/>
<dbReference type="eggNOG" id="COG2334">
    <property type="taxonomic scope" value="Bacteria"/>
</dbReference>
<dbReference type="HOGENOM" id="CLU_053300_1_0_5"/>
<dbReference type="BioCyc" id="CAULO:CC3364-MONOMER"/>
<dbReference type="UniPathway" id="UPA00050">
    <property type="reaction ID" value="UER00064"/>
</dbReference>
<dbReference type="Proteomes" id="UP000001816">
    <property type="component" value="Chromosome"/>
</dbReference>
<dbReference type="GO" id="GO:0005524">
    <property type="term" value="F:ATP binding"/>
    <property type="evidence" value="ECO:0007669"/>
    <property type="project" value="UniProtKB-KW"/>
</dbReference>
<dbReference type="GO" id="GO:0004413">
    <property type="term" value="F:homoserine kinase activity"/>
    <property type="evidence" value="ECO:0007669"/>
    <property type="project" value="UniProtKB-UniRule"/>
</dbReference>
<dbReference type="GO" id="GO:0009088">
    <property type="term" value="P:threonine biosynthetic process"/>
    <property type="evidence" value="ECO:0007669"/>
    <property type="project" value="UniProtKB-UniRule"/>
</dbReference>
<dbReference type="CDD" id="cd05153">
    <property type="entry name" value="HomoserineK_II"/>
    <property type="match status" value="1"/>
</dbReference>
<dbReference type="Gene3D" id="3.90.1200.10">
    <property type="match status" value="1"/>
</dbReference>
<dbReference type="Gene3D" id="3.30.200.20">
    <property type="entry name" value="Phosphorylase Kinase, domain 1"/>
    <property type="match status" value="1"/>
</dbReference>
<dbReference type="HAMAP" id="MF_00301">
    <property type="entry name" value="Homoser_kinase_2"/>
    <property type="match status" value="1"/>
</dbReference>
<dbReference type="InterPro" id="IPR002575">
    <property type="entry name" value="Aminoglycoside_PTrfase"/>
</dbReference>
<dbReference type="InterPro" id="IPR005280">
    <property type="entry name" value="Homoserine_kinase_II"/>
</dbReference>
<dbReference type="InterPro" id="IPR011009">
    <property type="entry name" value="Kinase-like_dom_sf"/>
</dbReference>
<dbReference type="InterPro" id="IPR050249">
    <property type="entry name" value="Pseudomonas-type_ThrB"/>
</dbReference>
<dbReference type="NCBIfam" id="NF003558">
    <property type="entry name" value="PRK05231.1"/>
    <property type="match status" value="1"/>
</dbReference>
<dbReference type="NCBIfam" id="TIGR00938">
    <property type="entry name" value="thrB_alt"/>
    <property type="match status" value="1"/>
</dbReference>
<dbReference type="PANTHER" id="PTHR21064:SF6">
    <property type="entry name" value="AMINOGLYCOSIDE PHOSPHOTRANSFERASE DOMAIN-CONTAINING PROTEIN"/>
    <property type="match status" value="1"/>
</dbReference>
<dbReference type="PANTHER" id="PTHR21064">
    <property type="entry name" value="AMINOGLYCOSIDE PHOSPHOTRANSFERASE DOMAIN-CONTAINING PROTEIN-RELATED"/>
    <property type="match status" value="1"/>
</dbReference>
<dbReference type="Pfam" id="PF01636">
    <property type="entry name" value="APH"/>
    <property type="match status" value="1"/>
</dbReference>
<dbReference type="SUPFAM" id="SSF56112">
    <property type="entry name" value="Protein kinase-like (PK-like)"/>
    <property type="match status" value="1"/>
</dbReference>